<reference key="1">
    <citation type="journal article" date="2015" name="Proc. Natl. Acad. Sci. U.S.A.">
        <title>Trichodesmium genome maintains abundant, widespread noncoding DNA in situ, despite oligotrophic lifestyle.</title>
        <authorList>
            <person name="Walworth N."/>
            <person name="Pfreundt U."/>
            <person name="Nelson W.C."/>
            <person name="Mincer T."/>
            <person name="Heidelberg J.F."/>
            <person name="Fu F."/>
            <person name="Waterbury J.B."/>
            <person name="Glavina del Rio T."/>
            <person name="Goodwin L."/>
            <person name="Kyrpides N.C."/>
            <person name="Land M.L."/>
            <person name="Woyke T."/>
            <person name="Hutchins D.A."/>
            <person name="Hess W.R."/>
            <person name="Webb E.A."/>
        </authorList>
    </citation>
    <scope>NUCLEOTIDE SEQUENCE [LARGE SCALE GENOMIC DNA]</scope>
    <source>
        <strain>IMS101</strain>
    </source>
</reference>
<evidence type="ECO:0000255" key="1">
    <source>
        <dbReference type="HAMAP-Rule" id="MF_01953"/>
    </source>
</evidence>
<organism>
    <name type="scientific">Trichodesmium erythraeum (strain IMS101)</name>
    <dbReference type="NCBI Taxonomy" id="203124"/>
    <lineage>
        <taxon>Bacteria</taxon>
        <taxon>Bacillati</taxon>
        <taxon>Cyanobacteriota</taxon>
        <taxon>Cyanophyceae</taxon>
        <taxon>Oscillatoriophycideae</taxon>
        <taxon>Oscillatoriales</taxon>
        <taxon>Microcoleaceae</taxon>
        <taxon>Trichodesmium</taxon>
    </lineage>
</organism>
<dbReference type="EC" id="3.5.1.5" evidence="1"/>
<dbReference type="EMBL" id="CP000393">
    <property type="protein sequence ID" value="ABG50181.1"/>
    <property type="molecule type" value="Genomic_DNA"/>
</dbReference>
<dbReference type="RefSeq" id="WP_011610574.1">
    <property type="nucleotide sequence ID" value="NC_008312.1"/>
</dbReference>
<dbReference type="SMR" id="Q117Z3"/>
<dbReference type="STRING" id="203124.Tery_0752"/>
<dbReference type="MEROPS" id="M38.982"/>
<dbReference type="KEGG" id="ter:Tery_0752"/>
<dbReference type="eggNOG" id="COG0804">
    <property type="taxonomic scope" value="Bacteria"/>
</dbReference>
<dbReference type="HOGENOM" id="CLU_000980_0_0_3"/>
<dbReference type="OrthoDB" id="9802793at2"/>
<dbReference type="UniPathway" id="UPA00258">
    <property type="reaction ID" value="UER00370"/>
</dbReference>
<dbReference type="GO" id="GO:0005737">
    <property type="term" value="C:cytoplasm"/>
    <property type="evidence" value="ECO:0007669"/>
    <property type="project" value="UniProtKB-SubCell"/>
</dbReference>
<dbReference type="GO" id="GO:0016151">
    <property type="term" value="F:nickel cation binding"/>
    <property type="evidence" value="ECO:0007669"/>
    <property type="project" value="UniProtKB-UniRule"/>
</dbReference>
<dbReference type="GO" id="GO:0009039">
    <property type="term" value="F:urease activity"/>
    <property type="evidence" value="ECO:0007669"/>
    <property type="project" value="UniProtKB-UniRule"/>
</dbReference>
<dbReference type="GO" id="GO:0043419">
    <property type="term" value="P:urea catabolic process"/>
    <property type="evidence" value="ECO:0007669"/>
    <property type="project" value="UniProtKB-UniRule"/>
</dbReference>
<dbReference type="CDD" id="cd00375">
    <property type="entry name" value="Urease_alpha"/>
    <property type="match status" value="1"/>
</dbReference>
<dbReference type="Gene3D" id="3.20.20.140">
    <property type="entry name" value="Metal-dependent hydrolases"/>
    <property type="match status" value="1"/>
</dbReference>
<dbReference type="Gene3D" id="2.30.40.10">
    <property type="entry name" value="Urease, subunit C, domain 1"/>
    <property type="match status" value="1"/>
</dbReference>
<dbReference type="HAMAP" id="MF_01953">
    <property type="entry name" value="Urease_alpha"/>
    <property type="match status" value="1"/>
</dbReference>
<dbReference type="InterPro" id="IPR006680">
    <property type="entry name" value="Amidohydro-rel"/>
</dbReference>
<dbReference type="InterPro" id="IPR011059">
    <property type="entry name" value="Metal-dep_hydrolase_composite"/>
</dbReference>
<dbReference type="InterPro" id="IPR032466">
    <property type="entry name" value="Metal_Hydrolase"/>
</dbReference>
<dbReference type="InterPro" id="IPR011612">
    <property type="entry name" value="Urease_alpha_N_dom"/>
</dbReference>
<dbReference type="InterPro" id="IPR050112">
    <property type="entry name" value="Urease_alpha_subunit"/>
</dbReference>
<dbReference type="InterPro" id="IPR017950">
    <property type="entry name" value="Urease_AS"/>
</dbReference>
<dbReference type="InterPro" id="IPR005848">
    <property type="entry name" value="Urease_asu"/>
</dbReference>
<dbReference type="InterPro" id="IPR017951">
    <property type="entry name" value="Urease_asu_c"/>
</dbReference>
<dbReference type="InterPro" id="IPR029754">
    <property type="entry name" value="Urease_Ni-bd"/>
</dbReference>
<dbReference type="NCBIfam" id="NF009685">
    <property type="entry name" value="PRK13206.1"/>
    <property type="match status" value="1"/>
</dbReference>
<dbReference type="NCBIfam" id="NF009686">
    <property type="entry name" value="PRK13207.1"/>
    <property type="match status" value="1"/>
</dbReference>
<dbReference type="NCBIfam" id="TIGR01792">
    <property type="entry name" value="urease_alph"/>
    <property type="match status" value="1"/>
</dbReference>
<dbReference type="PANTHER" id="PTHR43440">
    <property type="entry name" value="UREASE"/>
    <property type="match status" value="1"/>
</dbReference>
<dbReference type="PANTHER" id="PTHR43440:SF1">
    <property type="entry name" value="UREASE"/>
    <property type="match status" value="1"/>
</dbReference>
<dbReference type="Pfam" id="PF01979">
    <property type="entry name" value="Amidohydro_1"/>
    <property type="match status" value="1"/>
</dbReference>
<dbReference type="Pfam" id="PF00449">
    <property type="entry name" value="Urease_alpha"/>
    <property type="match status" value="1"/>
</dbReference>
<dbReference type="PRINTS" id="PR01752">
    <property type="entry name" value="UREASE"/>
</dbReference>
<dbReference type="SUPFAM" id="SSF51338">
    <property type="entry name" value="Composite domain of metallo-dependent hydrolases"/>
    <property type="match status" value="2"/>
</dbReference>
<dbReference type="SUPFAM" id="SSF51556">
    <property type="entry name" value="Metallo-dependent hydrolases"/>
    <property type="match status" value="1"/>
</dbReference>
<dbReference type="PROSITE" id="PS01120">
    <property type="entry name" value="UREASE_1"/>
    <property type="match status" value="1"/>
</dbReference>
<dbReference type="PROSITE" id="PS00145">
    <property type="entry name" value="UREASE_2"/>
    <property type="match status" value="1"/>
</dbReference>
<dbReference type="PROSITE" id="PS51368">
    <property type="entry name" value="UREASE_3"/>
    <property type="match status" value="1"/>
</dbReference>
<proteinExistence type="inferred from homology"/>
<comment type="catalytic activity">
    <reaction evidence="1">
        <text>urea + 2 H2O + H(+) = hydrogencarbonate + 2 NH4(+)</text>
        <dbReference type="Rhea" id="RHEA:20557"/>
        <dbReference type="ChEBI" id="CHEBI:15377"/>
        <dbReference type="ChEBI" id="CHEBI:15378"/>
        <dbReference type="ChEBI" id="CHEBI:16199"/>
        <dbReference type="ChEBI" id="CHEBI:17544"/>
        <dbReference type="ChEBI" id="CHEBI:28938"/>
        <dbReference type="EC" id="3.5.1.5"/>
    </reaction>
</comment>
<comment type="cofactor">
    <cofactor evidence="1">
        <name>Ni cation</name>
        <dbReference type="ChEBI" id="CHEBI:25516"/>
    </cofactor>
    <text evidence="1">Binds 2 nickel ions per subunit.</text>
</comment>
<comment type="pathway">
    <text evidence="1">Nitrogen metabolism; urea degradation; CO(2) and NH(3) from urea (urease route): step 1/1.</text>
</comment>
<comment type="subunit">
    <text evidence="1">Heterotrimer of UreA (gamma), UreB (beta) and UreC (alpha) subunits. Three heterotrimers associate to form the active enzyme.</text>
</comment>
<comment type="subcellular location">
    <subcellularLocation>
        <location evidence="1">Cytoplasm</location>
    </subcellularLocation>
</comment>
<comment type="PTM">
    <text evidence="1">Carboxylation allows a single lysine to coordinate two nickel ions.</text>
</comment>
<comment type="similarity">
    <text evidence="1">Belongs to the metallo-dependent hydrolases superfamily. Urease alpha subunit family.</text>
</comment>
<gene>
    <name evidence="1" type="primary">ureC</name>
    <name type="ordered locus">Tery_0752</name>
</gene>
<protein>
    <recommendedName>
        <fullName evidence="1">Urease subunit alpha</fullName>
        <ecNumber evidence="1">3.5.1.5</ecNumber>
    </recommendedName>
    <alternativeName>
        <fullName evidence="1">Urea amidohydrolase subunit alpha</fullName>
    </alternativeName>
</protein>
<keyword id="KW-0963">Cytoplasm</keyword>
<keyword id="KW-0378">Hydrolase</keyword>
<keyword id="KW-0479">Metal-binding</keyword>
<keyword id="KW-0533">Nickel</keyword>
<accession>Q117Z3</accession>
<sequence length="570" mass="61714">MSYRMNRRTYAETFGPTVGDRVRLADTELFIQVEKDYTTYGDEVKFGGGKVIRDGMGQSPISREGGAVDLVITNALILDWWGVVKADIGIKDGKIHKIGKAGNPYIQDRVDIIIGPSTEIIAGEGHIITAGGIDSHIHFICPQQIEIAIASGITTMIGGGTGPATGTNATTCTPGQWNIWMMLQAADAFPMNLGFLGKGNSAKPEGLIEQIKAGAMGLKLHEDWGTTPAAIDTCLSVADEYDVQVAIHTDTLNEAGFVENTIAAFKDRVIHTYHTEGAGGGHAPDIIKVCALKNVLPSSTNPTRPFTVNTLEEHLDMLMVCHHLDKNIPEDVAFAESRIRKETIAAEDILHDLGAFSAIASDSQAMGRVGEVIIRTWQTAHKMKVQRGILASEKKEVADNFRAKRYIAKYTINPAIMHGIADYVGSIEAGKLADICLWKPAMFGVKPEIVIKGGAIAWAQMGDPNASIPTPQPVYMRPMFGSFGGATSSTSLTFVSQEALDAEIPKKINLKTPAVAVSNTRNISKADMKLNEATPKIEVNPETYEVRADGELLTCEPAYVLPMTQRYFLF</sequence>
<feature type="chain" id="PRO_1000070702" description="Urease subunit alpha">
    <location>
        <begin position="1"/>
        <end position="570"/>
    </location>
</feature>
<feature type="domain" description="Urease" evidence="1">
    <location>
        <begin position="131"/>
        <end position="570"/>
    </location>
</feature>
<feature type="active site" description="Proton donor" evidence="1">
    <location>
        <position position="322"/>
    </location>
</feature>
<feature type="binding site" evidence="1">
    <location>
        <position position="136"/>
    </location>
    <ligand>
        <name>Ni(2+)</name>
        <dbReference type="ChEBI" id="CHEBI:49786"/>
        <label>1</label>
    </ligand>
</feature>
<feature type="binding site" evidence="1">
    <location>
        <position position="138"/>
    </location>
    <ligand>
        <name>Ni(2+)</name>
        <dbReference type="ChEBI" id="CHEBI:49786"/>
        <label>1</label>
    </ligand>
</feature>
<feature type="binding site" description="via carbamate group" evidence="1">
    <location>
        <position position="219"/>
    </location>
    <ligand>
        <name>Ni(2+)</name>
        <dbReference type="ChEBI" id="CHEBI:49786"/>
        <label>1</label>
    </ligand>
</feature>
<feature type="binding site" description="via carbamate group" evidence="1">
    <location>
        <position position="219"/>
    </location>
    <ligand>
        <name>Ni(2+)</name>
        <dbReference type="ChEBI" id="CHEBI:49786"/>
        <label>2</label>
    </ligand>
</feature>
<feature type="binding site" evidence="1">
    <location>
        <position position="221"/>
    </location>
    <ligand>
        <name>substrate</name>
    </ligand>
</feature>
<feature type="binding site" evidence="1">
    <location>
        <position position="248"/>
    </location>
    <ligand>
        <name>Ni(2+)</name>
        <dbReference type="ChEBI" id="CHEBI:49786"/>
        <label>2</label>
    </ligand>
</feature>
<feature type="binding site" evidence="1">
    <location>
        <position position="274"/>
    </location>
    <ligand>
        <name>Ni(2+)</name>
        <dbReference type="ChEBI" id="CHEBI:49786"/>
        <label>2</label>
    </ligand>
</feature>
<feature type="binding site" evidence="1">
    <location>
        <position position="362"/>
    </location>
    <ligand>
        <name>Ni(2+)</name>
        <dbReference type="ChEBI" id="CHEBI:49786"/>
        <label>1</label>
    </ligand>
</feature>
<feature type="modified residue" description="N6-carboxylysine" evidence="1">
    <location>
        <position position="219"/>
    </location>
</feature>
<name>URE1_TRIEI</name>